<comment type="catalytic activity">
    <reaction evidence="2">
        <text>L-seryl-[protein] + ATP = O-phospho-L-seryl-[protein] + ADP + H(+)</text>
        <dbReference type="Rhea" id="RHEA:17989"/>
        <dbReference type="Rhea" id="RHEA-COMP:9863"/>
        <dbReference type="Rhea" id="RHEA-COMP:11604"/>
        <dbReference type="ChEBI" id="CHEBI:15378"/>
        <dbReference type="ChEBI" id="CHEBI:29999"/>
        <dbReference type="ChEBI" id="CHEBI:30616"/>
        <dbReference type="ChEBI" id="CHEBI:83421"/>
        <dbReference type="ChEBI" id="CHEBI:456216"/>
        <dbReference type="EC" id="2.7.11.1"/>
    </reaction>
</comment>
<comment type="catalytic activity">
    <reaction evidence="2">
        <text>L-threonyl-[protein] + ATP = O-phospho-L-threonyl-[protein] + ADP + H(+)</text>
        <dbReference type="Rhea" id="RHEA:46608"/>
        <dbReference type="Rhea" id="RHEA-COMP:11060"/>
        <dbReference type="Rhea" id="RHEA-COMP:11605"/>
        <dbReference type="ChEBI" id="CHEBI:15378"/>
        <dbReference type="ChEBI" id="CHEBI:30013"/>
        <dbReference type="ChEBI" id="CHEBI:30616"/>
        <dbReference type="ChEBI" id="CHEBI:61977"/>
        <dbReference type="ChEBI" id="CHEBI:456216"/>
        <dbReference type="EC" id="2.7.11.1"/>
    </reaction>
</comment>
<comment type="cofactor">
    <cofactor evidence="2">
        <name>Mg(2+)</name>
        <dbReference type="ChEBI" id="CHEBI:18420"/>
    </cofactor>
</comment>
<comment type="similarity">
    <text evidence="2 4">Belongs to the protein kinase superfamily. Ser/Thr protein kinase family.</text>
</comment>
<reference evidence="7" key="1">
    <citation type="journal article" date="2005" name="Nature">
        <title>The genome of the social amoeba Dictyostelium discoideum.</title>
        <authorList>
            <person name="Eichinger L."/>
            <person name="Pachebat J.A."/>
            <person name="Gloeckner G."/>
            <person name="Rajandream M.A."/>
            <person name="Sucgang R."/>
            <person name="Berriman M."/>
            <person name="Song J."/>
            <person name="Olsen R."/>
            <person name="Szafranski K."/>
            <person name="Xu Q."/>
            <person name="Tunggal B."/>
            <person name="Kummerfeld S."/>
            <person name="Madera M."/>
            <person name="Konfortov B.A."/>
            <person name="Rivero F."/>
            <person name="Bankier A.T."/>
            <person name="Lehmann R."/>
            <person name="Hamlin N."/>
            <person name="Davies R."/>
            <person name="Gaudet P."/>
            <person name="Fey P."/>
            <person name="Pilcher K."/>
            <person name="Chen G."/>
            <person name="Saunders D."/>
            <person name="Sodergren E.J."/>
            <person name="Davis P."/>
            <person name="Kerhornou A."/>
            <person name="Nie X."/>
            <person name="Hall N."/>
            <person name="Anjard C."/>
            <person name="Hemphill L."/>
            <person name="Bason N."/>
            <person name="Farbrother P."/>
            <person name="Desany B."/>
            <person name="Just E."/>
            <person name="Morio T."/>
            <person name="Rost R."/>
            <person name="Churcher C.M."/>
            <person name="Cooper J."/>
            <person name="Haydock S."/>
            <person name="van Driessche N."/>
            <person name="Cronin A."/>
            <person name="Goodhead I."/>
            <person name="Muzny D.M."/>
            <person name="Mourier T."/>
            <person name="Pain A."/>
            <person name="Lu M."/>
            <person name="Harper D."/>
            <person name="Lindsay R."/>
            <person name="Hauser H."/>
            <person name="James K.D."/>
            <person name="Quiles M."/>
            <person name="Madan Babu M."/>
            <person name="Saito T."/>
            <person name="Buchrieser C."/>
            <person name="Wardroper A."/>
            <person name="Felder M."/>
            <person name="Thangavelu M."/>
            <person name="Johnson D."/>
            <person name="Knights A."/>
            <person name="Loulseged H."/>
            <person name="Mungall K.L."/>
            <person name="Oliver K."/>
            <person name="Price C."/>
            <person name="Quail M.A."/>
            <person name="Urushihara H."/>
            <person name="Hernandez J."/>
            <person name="Rabbinowitsch E."/>
            <person name="Steffen D."/>
            <person name="Sanders M."/>
            <person name="Ma J."/>
            <person name="Kohara Y."/>
            <person name="Sharp S."/>
            <person name="Simmonds M.N."/>
            <person name="Spiegler S."/>
            <person name="Tivey A."/>
            <person name="Sugano S."/>
            <person name="White B."/>
            <person name="Walker D."/>
            <person name="Woodward J.R."/>
            <person name="Winckler T."/>
            <person name="Tanaka Y."/>
            <person name="Shaulsky G."/>
            <person name="Schleicher M."/>
            <person name="Weinstock G.M."/>
            <person name="Rosenthal A."/>
            <person name="Cox E.C."/>
            <person name="Chisholm R.L."/>
            <person name="Gibbs R.A."/>
            <person name="Loomis W.F."/>
            <person name="Platzer M."/>
            <person name="Kay R.R."/>
            <person name="Williams J.G."/>
            <person name="Dear P.H."/>
            <person name="Noegel A.A."/>
            <person name="Barrell B.G."/>
            <person name="Kuspa A."/>
        </authorList>
    </citation>
    <scope>NUCLEOTIDE SEQUENCE [LARGE SCALE GENOMIC DNA]</scope>
    <source>
        <strain evidence="7">AX4</strain>
    </source>
</reference>
<name>Y2350_DICDI</name>
<feature type="chain" id="PRO_0000374049" description="Probable serine/threonine-protein kinase DDB_G0292350">
    <location>
        <begin position="1"/>
        <end position="1224"/>
    </location>
</feature>
<feature type="domain" description="Protein kinase" evidence="4">
    <location>
        <begin position="935"/>
        <end position="1193"/>
    </location>
</feature>
<feature type="region of interest" description="Disordered" evidence="6">
    <location>
        <begin position="57"/>
        <end position="98"/>
    </location>
</feature>
<feature type="region of interest" description="Disordered" evidence="6">
    <location>
        <begin position="252"/>
        <end position="284"/>
    </location>
</feature>
<feature type="region of interest" description="Disordered" evidence="6">
    <location>
        <begin position="693"/>
        <end position="784"/>
    </location>
</feature>
<feature type="region of interest" description="Disordered" evidence="6">
    <location>
        <begin position="815"/>
        <end position="836"/>
    </location>
</feature>
<feature type="coiled-coil region" evidence="3">
    <location>
        <begin position="352"/>
        <end position="381"/>
    </location>
</feature>
<feature type="coiled-coil region" evidence="3">
    <location>
        <begin position="540"/>
        <end position="569"/>
    </location>
</feature>
<feature type="compositionally biased region" description="Low complexity" evidence="6">
    <location>
        <begin position="58"/>
        <end position="74"/>
    </location>
</feature>
<feature type="compositionally biased region" description="Low complexity" evidence="6">
    <location>
        <begin position="83"/>
        <end position="95"/>
    </location>
</feature>
<feature type="compositionally biased region" description="Low complexity" evidence="6">
    <location>
        <begin position="743"/>
        <end position="768"/>
    </location>
</feature>
<feature type="compositionally biased region" description="Polar residues" evidence="6">
    <location>
        <begin position="772"/>
        <end position="784"/>
    </location>
</feature>
<feature type="active site" description="Proton acceptor" evidence="1 4 5">
    <location>
        <position position="1063"/>
    </location>
</feature>
<feature type="binding site" evidence="1 4">
    <location>
        <begin position="941"/>
        <end position="949"/>
    </location>
    <ligand>
        <name>ATP</name>
        <dbReference type="ChEBI" id="CHEBI:30616"/>
    </ligand>
</feature>
<feature type="binding site" evidence="1 4">
    <location>
        <position position="964"/>
    </location>
    <ligand>
        <name>ATP</name>
        <dbReference type="ChEBI" id="CHEBI:30616"/>
    </ligand>
</feature>
<gene>
    <name type="ORF">DDB_G0292350</name>
</gene>
<evidence type="ECO:0000250" key="1">
    <source>
        <dbReference type="UniProtKB" id="P28523"/>
    </source>
</evidence>
<evidence type="ECO:0000250" key="2">
    <source>
        <dbReference type="UniProtKB" id="Q869N2"/>
    </source>
</evidence>
<evidence type="ECO:0000255" key="3"/>
<evidence type="ECO:0000255" key="4">
    <source>
        <dbReference type="PROSITE-ProRule" id="PRU00159"/>
    </source>
</evidence>
<evidence type="ECO:0000255" key="5">
    <source>
        <dbReference type="PROSITE-ProRule" id="PRU10027"/>
    </source>
</evidence>
<evidence type="ECO:0000256" key="6">
    <source>
        <dbReference type="SAM" id="MobiDB-lite"/>
    </source>
</evidence>
<evidence type="ECO:0000312" key="7">
    <source>
        <dbReference type="EMBL" id="EAL61299.1"/>
    </source>
</evidence>
<sequence length="1224" mass="138962">MKSFLNKNKNSKKIIILDDNDFSKYQQRYDLQNQNIEIVSSPLQNIRSQQINDGVQMSGSIQSDLSSSDNFTSSGGFGGGGNSSSNTSNRNSDNSTQRPLMVDIGLEYKYRLALEQNPNDFKALVKWGSLIYKNIKNQMGGKHVDVCLMDWNEELIPIPQNNNNHHNHNHHNNHTSGNFTGNINSNTTLSNSFFETLNSFNLREPLFDVCGKYQSSLQLSGGSNLLNIPFSTLLNYNLNEQLNILVNNLNNSSPSSSSSSIKTKNTTSTTTTTTTTKNLNDISNNINNSRVLRSVSLPPAPPPPPTEDPNSPWSDPILWMKWGDCLFLLCTYLELPMYRATCEKYFKCIQILFKQQEKQHQQQQQQQQNQQDKEKFEKQNNYNIKLLAIVLRKWGITLSRYSRRMKSQFLMSEWTSDENIQVEELWKVLHSQSIQSLLISNKISPSLVTQYHLATAYHRHAITLNQFGCQSKEEIYGLITNSCKIYYETLLESLSDTFLQQLQLQQQQQPWHDIEYYNNNEIFNDQFKSKSLENWGRALDVQLSTKLNDEEETIEKEEEDLNSVDEYLTTFSKSVLKGVTPSLEGVVSLCLNSKQALQYKAINSVSVLCRSSEIVKSPIYNELMDQMTKVESFVSKRDDAESLLSQQKTLKSMPPKLQAYVRMSGLGEEEIMRNFEIAWNSIYFLTKDTIPNQPIPPNYYRSNKKNKLKQRQLNDSNNQDEKEEPEEIKPPLLPSIHRTNQLNNNNNNNNNINNNNINNNNINNNKNGNSGGETPSPSSSFVITPFTSNSQSKFNTQRQFLSNSTLFNLSSSGIFTNNNNNNNGGSTITTTTTNNISPTKTNGWTLTLPSKAPTRRATVSLININDLINQQQQNQINSVSTLSQNNIILNNNNNLDNKPISKYIPNSIIRTTVNPPLLSRCDETIFSSGTPLPLFRDKIKLGTGAFGNVFYAIRKSDSSPVAIKVLMERTKKDSPIIPELYIHSACNHSNIVTYIESYLCKGHVWIILEYCDGGTVRDLLQATCTPGNPNNLQLFEETLIAYIITELLEGLVYLRSKGIIHRDLKSRNILLTRKGKVKIADFGLATTCSLGRGRTRMCGTMGRIAPEVIRREPYDTQSDIYSLGCLIIEMAEGTVPYGKDSSLKALFYTAIHQYKLPNPKKYTKEFVDFLYLCLNPDPFKRPTPEMLLHHTFLSGADRGKSILLGRFKNQDTRKNLLLDNFVAF</sequence>
<protein>
    <recommendedName>
        <fullName>Probable serine/threonine-protein kinase DDB_G0292350</fullName>
        <ecNumber>2.7.11.1</ecNumber>
    </recommendedName>
</protein>
<organism>
    <name type="scientific">Dictyostelium discoideum</name>
    <name type="common">Social amoeba</name>
    <dbReference type="NCBI Taxonomy" id="44689"/>
    <lineage>
        <taxon>Eukaryota</taxon>
        <taxon>Amoebozoa</taxon>
        <taxon>Evosea</taxon>
        <taxon>Eumycetozoa</taxon>
        <taxon>Dictyostelia</taxon>
        <taxon>Dictyosteliales</taxon>
        <taxon>Dictyosteliaceae</taxon>
        <taxon>Dictyostelium</taxon>
    </lineage>
</organism>
<dbReference type="EC" id="2.7.11.1"/>
<dbReference type="EMBL" id="AAFI02000189">
    <property type="protein sequence ID" value="EAL61299.1"/>
    <property type="molecule type" value="Genomic_DNA"/>
</dbReference>
<dbReference type="RefSeq" id="XP_629713.1">
    <property type="nucleotide sequence ID" value="XM_629711.1"/>
</dbReference>
<dbReference type="SMR" id="Q54DC8"/>
<dbReference type="FunCoup" id="Q54DC8">
    <property type="interactions" value="465"/>
</dbReference>
<dbReference type="PaxDb" id="44689-DDB0230010"/>
<dbReference type="EnsemblProtists" id="EAL61299">
    <property type="protein sequence ID" value="EAL61299"/>
    <property type="gene ID" value="DDB_G0292350"/>
</dbReference>
<dbReference type="GeneID" id="8628627"/>
<dbReference type="KEGG" id="ddi:DDB_G0292350"/>
<dbReference type="dictyBase" id="DDB_G0292350"/>
<dbReference type="VEuPathDB" id="AmoebaDB:DDB_G0292350"/>
<dbReference type="eggNOG" id="KOG0578">
    <property type="taxonomic scope" value="Eukaryota"/>
</dbReference>
<dbReference type="HOGENOM" id="CLU_268380_0_0_1"/>
<dbReference type="InParanoid" id="Q54DC8"/>
<dbReference type="OMA" id="QFLMSEW"/>
<dbReference type="PRO" id="PR:Q54DC8"/>
<dbReference type="Proteomes" id="UP000002195">
    <property type="component" value="Chromosome 6"/>
</dbReference>
<dbReference type="GO" id="GO:0005737">
    <property type="term" value="C:cytoplasm"/>
    <property type="evidence" value="ECO:0000318"/>
    <property type="project" value="GO_Central"/>
</dbReference>
<dbReference type="GO" id="GO:0005524">
    <property type="term" value="F:ATP binding"/>
    <property type="evidence" value="ECO:0007669"/>
    <property type="project" value="UniProtKB-KW"/>
</dbReference>
<dbReference type="GO" id="GO:0046872">
    <property type="term" value="F:metal ion binding"/>
    <property type="evidence" value="ECO:0007669"/>
    <property type="project" value="UniProtKB-KW"/>
</dbReference>
<dbReference type="GO" id="GO:0106310">
    <property type="term" value="F:protein serine kinase activity"/>
    <property type="evidence" value="ECO:0007669"/>
    <property type="project" value="RHEA"/>
</dbReference>
<dbReference type="GO" id="GO:0004674">
    <property type="term" value="F:protein serine/threonine kinase activity"/>
    <property type="evidence" value="ECO:0000318"/>
    <property type="project" value="GO_Central"/>
</dbReference>
<dbReference type="GO" id="GO:0035556">
    <property type="term" value="P:intracellular signal transduction"/>
    <property type="evidence" value="ECO:0000318"/>
    <property type="project" value="GO_Central"/>
</dbReference>
<dbReference type="CDD" id="cd05122">
    <property type="entry name" value="PKc_STE"/>
    <property type="match status" value="1"/>
</dbReference>
<dbReference type="Gene3D" id="1.10.510.10">
    <property type="entry name" value="Transferase(Phosphotransferase) domain 1"/>
    <property type="match status" value="1"/>
</dbReference>
<dbReference type="InterPro" id="IPR011009">
    <property type="entry name" value="Kinase-like_dom_sf"/>
</dbReference>
<dbReference type="InterPro" id="IPR000719">
    <property type="entry name" value="Prot_kinase_dom"/>
</dbReference>
<dbReference type="InterPro" id="IPR017441">
    <property type="entry name" value="Protein_kinase_ATP_BS"/>
</dbReference>
<dbReference type="InterPro" id="IPR008271">
    <property type="entry name" value="Ser/Thr_kinase_AS"/>
</dbReference>
<dbReference type="InterPro" id="IPR050629">
    <property type="entry name" value="STE20/SPS1-PAK"/>
</dbReference>
<dbReference type="PANTHER" id="PTHR48012:SF3">
    <property type="entry name" value="SERINE_THREONINE-PROTEIN KINASE DDB_G0292350-RELATED"/>
    <property type="match status" value="1"/>
</dbReference>
<dbReference type="PANTHER" id="PTHR48012">
    <property type="entry name" value="STERILE20-LIKE KINASE, ISOFORM B-RELATED"/>
    <property type="match status" value="1"/>
</dbReference>
<dbReference type="Pfam" id="PF00069">
    <property type="entry name" value="Pkinase"/>
    <property type="match status" value="1"/>
</dbReference>
<dbReference type="SMART" id="SM00220">
    <property type="entry name" value="S_TKc"/>
    <property type="match status" value="1"/>
</dbReference>
<dbReference type="SUPFAM" id="SSF56112">
    <property type="entry name" value="Protein kinase-like (PK-like)"/>
    <property type="match status" value="1"/>
</dbReference>
<dbReference type="PROSITE" id="PS00107">
    <property type="entry name" value="PROTEIN_KINASE_ATP"/>
    <property type="match status" value="1"/>
</dbReference>
<dbReference type="PROSITE" id="PS50011">
    <property type="entry name" value="PROTEIN_KINASE_DOM"/>
    <property type="match status" value="1"/>
</dbReference>
<dbReference type="PROSITE" id="PS00108">
    <property type="entry name" value="PROTEIN_KINASE_ST"/>
    <property type="match status" value="1"/>
</dbReference>
<keyword id="KW-0067">ATP-binding</keyword>
<keyword id="KW-0175">Coiled coil</keyword>
<keyword id="KW-0418">Kinase</keyword>
<keyword id="KW-0460">Magnesium</keyword>
<keyword id="KW-0479">Metal-binding</keyword>
<keyword id="KW-0547">Nucleotide-binding</keyword>
<keyword id="KW-1185">Reference proteome</keyword>
<keyword id="KW-0723">Serine/threonine-protein kinase</keyword>
<keyword id="KW-0808">Transferase</keyword>
<proteinExistence type="inferred from homology"/>
<accession>Q54DC8</accession>